<name>GREA_CLOBH</name>
<sequence length="160" mass="17874">MSEAKKYVMTYEGVKKLEEELEFLKTVKRKEITEKIKVALSFGDLSENSEYDEAKNEQAFVEGRIIQLENMLKNASIVDENEVPKDVVSVGSIVKVKDYEFDEEVEYIIVGSAEADPMNNKISNESPVGHGLIGKKAGDIIEVAVPDGVSKYEILEVNRA</sequence>
<feature type="chain" id="PRO_1000094162" description="Transcription elongation factor GreA">
    <location>
        <begin position="1"/>
        <end position="160"/>
    </location>
</feature>
<feature type="coiled-coil region" evidence="1">
    <location>
        <begin position="12"/>
        <end position="76"/>
    </location>
</feature>
<evidence type="ECO:0000255" key="1">
    <source>
        <dbReference type="HAMAP-Rule" id="MF_00105"/>
    </source>
</evidence>
<proteinExistence type="inferred from homology"/>
<accession>A5I7P5</accession>
<accession>A7G8X7</accession>
<dbReference type="EMBL" id="CP000727">
    <property type="protein sequence ID" value="ABS39277.1"/>
    <property type="molecule type" value="Genomic_DNA"/>
</dbReference>
<dbReference type="EMBL" id="AM412317">
    <property type="protein sequence ID" value="CAL85080.1"/>
    <property type="molecule type" value="Genomic_DNA"/>
</dbReference>
<dbReference type="RefSeq" id="WP_012048372.1">
    <property type="nucleotide sequence ID" value="NC_009698.1"/>
</dbReference>
<dbReference type="RefSeq" id="YP_001256001.1">
    <property type="nucleotide sequence ID" value="NC_009495.1"/>
</dbReference>
<dbReference type="RefSeq" id="YP_001389242.1">
    <property type="nucleotide sequence ID" value="NC_009698.1"/>
</dbReference>
<dbReference type="SMR" id="A5I7P5"/>
<dbReference type="GeneID" id="5187697"/>
<dbReference type="KEGG" id="cbh:CLC_3483"/>
<dbReference type="KEGG" id="cbo:CBO3519"/>
<dbReference type="PATRIC" id="fig|413999.7.peg.3497"/>
<dbReference type="HOGENOM" id="CLU_101379_2_1_9"/>
<dbReference type="PRO" id="PR:A5I7P5"/>
<dbReference type="Proteomes" id="UP000001986">
    <property type="component" value="Chromosome"/>
</dbReference>
<dbReference type="GO" id="GO:0003677">
    <property type="term" value="F:DNA binding"/>
    <property type="evidence" value="ECO:0007669"/>
    <property type="project" value="UniProtKB-UniRule"/>
</dbReference>
<dbReference type="GO" id="GO:0070063">
    <property type="term" value="F:RNA polymerase binding"/>
    <property type="evidence" value="ECO:0007669"/>
    <property type="project" value="InterPro"/>
</dbReference>
<dbReference type="GO" id="GO:0006354">
    <property type="term" value="P:DNA-templated transcription elongation"/>
    <property type="evidence" value="ECO:0000318"/>
    <property type="project" value="GO_Central"/>
</dbReference>
<dbReference type="GO" id="GO:0032784">
    <property type="term" value="P:regulation of DNA-templated transcription elongation"/>
    <property type="evidence" value="ECO:0007669"/>
    <property type="project" value="UniProtKB-UniRule"/>
</dbReference>
<dbReference type="FunFam" id="1.10.287.180:FF:000001">
    <property type="entry name" value="Transcription elongation factor GreA"/>
    <property type="match status" value="1"/>
</dbReference>
<dbReference type="FunFam" id="3.10.50.30:FF:000001">
    <property type="entry name" value="Transcription elongation factor GreA"/>
    <property type="match status" value="1"/>
</dbReference>
<dbReference type="Gene3D" id="3.10.50.30">
    <property type="entry name" value="Transcription elongation factor, GreA/GreB, C-terminal domain"/>
    <property type="match status" value="1"/>
</dbReference>
<dbReference type="Gene3D" id="1.10.287.180">
    <property type="entry name" value="Transcription elongation factor, GreA/GreB, N-terminal domain"/>
    <property type="match status" value="1"/>
</dbReference>
<dbReference type="HAMAP" id="MF_00105">
    <property type="entry name" value="GreA_GreB"/>
    <property type="match status" value="1"/>
</dbReference>
<dbReference type="InterPro" id="IPR036953">
    <property type="entry name" value="GreA/GreB_C_sf"/>
</dbReference>
<dbReference type="InterPro" id="IPR018151">
    <property type="entry name" value="TF_GreA/GreB_CS"/>
</dbReference>
<dbReference type="InterPro" id="IPR006359">
    <property type="entry name" value="Tscrpt_elong_fac_GreA"/>
</dbReference>
<dbReference type="InterPro" id="IPR028624">
    <property type="entry name" value="Tscrpt_elong_fac_GreA/B"/>
</dbReference>
<dbReference type="InterPro" id="IPR001437">
    <property type="entry name" value="Tscrpt_elong_fac_GreA/B_C"/>
</dbReference>
<dbReference type="InterPro" id="IPR023459">
    <property type="entry name" value="Tscrpt_elong_fac_GreA/B_fam"/>
</dbReference>
<dbReference type="InterPro" id="IPR022691">
    <property type="entry name" value="Tscrpt_elong_fac_GreA/B_N"/>
</dbReference>
<dbReference type="InterPro" id="IPR036805">
    <property type="entry name" value="Tscrpt_elong_fac_GreA/B_N_sf"/>
</dbReference>
<dbReference type="NCBIfam" id="TIGR01462">
    <property type="entry name" value="greA"/>
    <property type="match status" value="1"/>
</dbReference>
<dbReference type="NCBIfam" id="NF001261">
    <property type="entry name" value="PRK00226.1-2"/>
    <property type="match status" value="1"/>
</dbReference>
<dbReference type="NCBIfam" id="NF001263">
    <property type="entry name" value="PRK00226.1-4"/>
    <property type="match status" value="1"/>
</dbReference>
<dbReference type="PANTHER" id="PTHR30437">
    <property type="entry name" value="TRANSCRIPTION ELONGATION FACTOR GREA"/>
    <property type="match status" value="1"/>
</dbReference>
<dbReference type="PANTHER" id="PTHR30437:SF4">
    <property type="entry name" value="TRANSCRIPTION ELONGATION FACTOR GREA"/>
    <property type="match status" value="1"/>
</dbReference>
<dbReference type="Pfam" id="PF01272">
    <property type="entry name" value="GreA_GreB"/>
    <property type="match status" value="1"/>
</dbReference>
<dbReference type="Pfam" id="PF03449">
    <property type="entry name" value="GreA_GreB_N"/>
    <property type="match status" value="1"/>
</dbReference>
<dbReference type="PIRSF" id="PIRSF006092">
    <property type="entry name" value="GreA_GreB"/>
    <property type="match status" value="1"/>
</dbReference>
<dbReference type="SUPFAM" id="SSF54534">
    <property type="entry name" value="FKBP-like"/>
    <property type="match status" value="1"/>
</dbReference>
<dbReference type="SUPFAM" id="SSF46557">
    <property type="entry name" value="GreA transcript cleavage protein, N-terminal domain"/>
    <property type="match status" value="1"/>
</dbReference>
<dbReference type="PROSITE" id="PS00829">
    <property type="entry name" value="GREAB_1"/>
    <property type="match status" value="1"/>
</dbReference>
<dbReference type="PROSITE" id="PS00830">
    <property type="entry name" value="GREAB_2"/>
    <property type="match status" value="1"/>
</dbReference>
<reference key="1">
    <citation type="journal article" date="2007" name="Genome Res.">
        <title>Genome sequence of a proteolytic (Group I) Clostridium botulinum strain Hall A and comparative analysis of the clostridial genomes.</title>
        <authorList>
            <person name="Sebaihia M."/>
            <person name="Peck M.W."/>
            <person name="Minton N.P."/>
            <person name="Thomson N.R."/>
            <person name="Holden M.T.G."/>
            <person name="Mitchell W.J."/>
            <person name="Carter A.T."/>
            <person name="Bentley S.D."/>
            <person name="Mason D.R."/>
            <person name="Crossman L."/>
            <person name="Paul C.J."/>
            <person name="Ivens A."/>
            <person name="Wells-Bennik M.H.J."/>
            <person name="Davis I.J."/>
            <person name="Cerdeno-Tarraga A.M."/>
            <person name="Churcher C."/>
            <person name="Quail M.A."/>
            <person name="Chillingworth T."/>
            <person name="Feltwell T."/>
            <person name="Fraser A."/>
            <person name="Goodhead I."/>
            <person name="Hance Z."/>
            <person name="Jagels K."/>
            <person name="Larke N."/>
            <person name="Maddison M."/>
            <person name="Moule S."/>
            <person name="Mungall K."/>
            <person name="Norbertczak H."/>
            <person name="Rabbinowitsch E."/>
            <person name="Sanders M."/>
            <person name="Simmonds M."/>
            <person name="White B."/>
            <person name="Whithead S."/>
            <person name="Parkhill J."/>
        </authorList>
    </citation>
    <scope>NUCLEOTIDE SEQUENCE [LARGE SCALE GENOMIC DNA]</scope>
    <source>
        <strain>Hall / ATCC 3502 / NCTC 13319 / Type A</strain>
    </source>
</reference>
<reference key="2">
    <citation type="journal article" date="2007" name="PLoS ONE">
        <title>Analysis of the neurotoxin complex genes in Clostridium botulinum A1-A4 and B1 strains: BoNT/A3, /Ba4 and /B1 clusters are located within plasmids.</title>
        <authorList>
            <person name="Smith T.J."/>
            <person name="Hill K.K."/>
            <person name="Foley B.T."/>
            <person name="Detter J.C."/>
            <person name="Munk A.C."/>
            <person name="Bruce D.C."/>
            <person name="Doggett N.A."/>
            <person name="Smith L.A."/>
            <person name="Marks J.D."/>
            <person name="Xie G."/>
            <person name="Brettin T.S."/>
        </authorList>
    </citation>
    <scope>NUCLEOTIDE SEQUENCE [LARGE SCALE GENOMIC DNA]</scope>
    <source>
        <strain>Hall / ATCC 3502 / NCTC 13319 / Type A</strain>
    </source>
</reference>
<keyword id="KW-0175">Coiled coil</keyword>
<keyword id="KW-0238">DNA-binding</keyword>
<keyword id="KW-1185">Reference proteome</keyword>
<keyword id="KW-0804">Transcription</keyword>
<keyword id="KW-0805">Transcription regulation</keyword>
<gene>
    <name evidence="1" type="primary">greA</name>
    <name type="ordered locus">CBO3519</name>
    <name type="ordered locus">CLC_3483</name>
</gene>
<organism>
    <name type="scientific">Clostridium botulinum (strain Hall / ATCC 3502 / NCTC 13319 / Type A)</name>
    <dbReference type="NCBI Taxonomy" id="441771"/>
    <lineage>
        <taxon>Bacteria</taxon>
        <taxon>Bacillati</taxon>
        <taxon>Bacillota</taxon>
        <taxon>Clostridia</taxon>
        <taxon>Eubacteriales</taxon>
        <taxon>Clostridiaceae</taxon>
        <taxon>Clostridium</taxon>
    </lineage>
</organism>
<comment type="function">
    <text evidence="1">Necessary for efficient RNA polymerase transcription elongation past template-encoded arresting sites. The arresting sites in DNA have the property of trapping a certain fraction of elongating RNA polymerases that pass through, resulting in locked ternary complexes. Cleavage of the nascent transcript by cleavage factors such as GreA or GreB allows the resumption of elongation from the new 3'terminus. GreA releases sequences of 2 to 3 nucleotides.</text>
</comment>
<comment type="similarity">
    <text evidence="1">Belongs to the GreA/GreB family.</text>
</comment>
<protein>
    <recommendedName>
        <fullName evidence="1">Transcription elongation factor GreA</fullName>
    </recommendedName>
    <alternativeName>
        <fullName evidence="1">Transcript cleavage factor GreA</fullName>
    </alternativeName>
</protein>